<keyword id="KW-0028">Amino-acid biosynthesis</keyword>
<keyword id="KW-0057">Aromatic amino acid biosynthesis</keyword>
<keyword id="KW-0456">Lyase</keyword>
<keyword id="KW-1185">Reference proteome</keyword>
<keyword id="KW-0822">Tryptophan biosynthesis</keyword>
<sequence length="272" mass="28566">MSRLAGLFVQLRDAGRAALIPFMTAGDPSLTATVPLMHALVAAGADAIELGMPFSDPMADGPSIQRASERALARGVKLRMVLEWVREFRTTNSHTPVILMGYLNPVEAMGITSFAEAAATAGVDGVILVDLTPEEGRGEAVVLRQRGIDPIFLLAPTSGPERVATVRSMGSGFVYYVSLRGITGAAQADWAEVLERVQHLHRQLGLPVAIGFGIRDAATVARVATGADAVVVGSALVDQLAACATDQEAIAAAIRFVEPLAQAVRSTERRGA</sequence>
<accession>B7J4S8</accession>
<reference key="1">
    <citation type="journal article" date="2008" name="BMC Genomics">
        <title>Acidithiobacillus ferrooxidans metabolism: from genome sequence to industrial applications.</title>
        <authorList>
            <person name="Valdes J."/>
            <person name="Pedroso I."/>
            <person name="Quatrini R."/>
            <person name="Dodson R.J."/>
            <person name="Tettelin H."/>
            <person name="Blake R. II"/>
            <person name="Eisen J.A."/>
            <person name="Holmes D.S."/>
        </authorList>
    </citation>
    <scope>NUCLEOTIDE SEQUENCE [LARGE SCALE GENOMIC DNA]</scope>
    <source>
        <strain>ATCC 23270 / DSM 14882 / CIP 104768 / NCIMB 8455</strain>
    </source>
</reference>
<proteinExistence type="inferred from homology"/>
<dbReference type="EC" id="4.2.1.20" evidence="1"/>
<dbReference type="EMBL" id="CP001219">
    <property type="protein sequence ID" value="ACK80601.1"/>
    <property type="molecule type" value="Genomic_DNA"/>
</dbReference>
<dbReference type="RefSeq" id="WP_009567136.1">
    <property type="nucleotide sequence ID" value="NC_011761.1"/>
</dbReference>
<dbReference type="SMR" id="B7J4S8"/>
<dbReference type="STRING" id="243159.AFE_2068"/>
<dbReference type="PaxDb" id="243159-AFE_2068"/>
<dbReference type="GeneID" id="65281204"/>
<dbReference type="KEGG" id="afr:AFE_2068"/>
<dbReference type="eggNOG" id="COG0159">
    <property type="taxonomic scope" value="Bacteria"/>
</dbReference>
<dbReference type="HOGENOM" id="CLU_016734_0_0_6"/>
<dbReference type="UniPathway" id="UPA00035">
    <property type="reaction ID" value="UER00044"/>
</dbReference>
<dbReference type="Proteomes" id="UP000001362">
    <property type="component" value="Chromosome"/>
</dbReference>
<dbReference type="GO" id="GO:0005829">
    <property type="term" value="C:cytosol"/>
    <property type="evidence" value="ECO:0007669"/>
    <property type="project" value="TreeGrafter"/>
</dbReference>
<dbReference type="GO" id="GO:0004834">
    <property type="term" value="F:tryptophan synthase activity"/>
    <property type="evidence" value="ECO:0007669"/>
    <property type="project" value="UniProtKB-UniRule"/>
</dbReference>
<dbReference type="CDD" id="cd04724">
    <property type="entry name" value="Tryptophan_synthase_alpha"/>
    <property type="match status" value="1"/>
</dbReference>
<dbReference type="FunFam" id="3.20.20.70:FF:000037">
    <property type="entry name" value="Tryptophan synthase alpha chain"/>
    <property type="match status" value="1"/>
</dbReference>
<dbReference type="Gene3D" id="3.20.20.70">
    <property type="entry name" value="Aldolase class I"/>
    <property type="match status" value="1"/>
</dbReference>
<dbReference type="HAMAP" id="MF_00131">
    <property type="entry name" value="Trp_synth_alpha"/>
    <property type="match status" value="1"/>
</dbReference>
<dbReference type="InterPro" id="IPR013785">
    <property type="entry name" value="Aldolase_TIM"/>
</dbReference>
<dbReference type="InterPro" id="IPR011060">
    <property type="entry name" value="RibuloseP-bd_barrel"/>
</dbReference>
<dbReference type="InterPro" id="IPR018204">
    <property type="entry name" value="Trp_synthase_alpha_AS"/>
</dbReference>
<dbReference type="InterPro" id="IPR002028">
    <property type="entry name" value="Trp_synthase_suA"/>
</dbReference>
<dbReference type="NCBIfam" id="TIGR00262">
    <property type="entry name" value="trpA"/>
    <property type="match status" value="1"/>
</dbReference>
<dbReference type="PANTHER" id="PTHR43406:SF1">
    <property type="entry name" value="TRYPTOPHAN SYNTHASE ALPHA CHAIN, CHLOROPLASTIC"/>
    <property type="match status" value="1"/>
</dbReference>
<dbReference type="PANTHER" id="PTHR43406">
    <property type="entry name" value="TRYPTOPHAN SYNTHASE, ALPHA CHAIN"/>
    <property type="match status" value="1"/>
</dbReference>
<dbReference type="Pfam" id="PF00290">
    <property type="entry name" value="Trp_syntA"/>
    <property type="match status" value="1"/>
</dbReference>
<dbReference type="SUPFAM" id="SSF51366">
    <property type="entry name" value="Ribulose-phoshate binding barrel"/>
    <property type="match status" value="1"/>
</dbReference>
<dbReference type="PROSITE" id="PS00167">
    <property type="entry name" value="TRP_SYNTHASE_ALPHA"/>
    <property type="match status" value="1"/>
</dbReference>
<gene>
    <name evidence="1" type="primary">trpA</name>
    <name type="ordered locus">AFE_2068</name>
</gene>
<name>TRPA_ACIF2</name>
<protein>
    <recommendedName>
        <fullName evidence="1">Tryptophan synthase alpha chain</fullName>
        <ecNumber evidence="1">4.2.1.20</ecNumber>
    </recommendedName>
</protein>
<feature type="chain" id="PRO_1000117728" description="Tryptophan synthase alpha chain">
    <location>
        <begin position="1"/>
        <end position="272"/>
    </location>
</feature>
<feature type="active site" description="Proton acceptor" evidence="1">
    <location>
        <position position="49"/>
    </location>
</feature>
<feature type="active site" description="Proton acceptor" evidence="1">
    <location>
        <position position="60"/>
    </location>
</feature>
<comment type="function">
    <text evidence="1">The alpha subunit is responsible for the aldol cleavage of indoleglycerol phosphate to indole and glyceraldehyde 3-phosphate.</text>
</comment>
<comment type="catalytic activity">
    <reaction evidence="1">
        <text>(1S,2R)-1-C-(indol-3-yl)glycerol 3-phosphate + L-serine = D-glyceraldehyde 3-phosphate + L-tryptophan + H2O</text>
        <dbReference type="Rhea" id="RHEA:10532"/>
        <dbReference type="ChEBI" id="CHEBI:15377"/>
        <dbReference type="ChEBI" id="CHEBI:33384"/>
        <dbReference type="ChEBI" id="CHEBI:57912"/>
        <dbReference type="ChEBI" id="CHEBI:58866"/>
        <dbReference type="ChEBI" id="CHEBI:59776"/>
        <dbReference type="EC" id="4.2.1.20"/>
    </reaction>
</comment>
<comment type="pathway">
    <text evidence="1">Amino-acid biosynthesis; L-tryptophan biosynthesis; L-tryptophan from chorismate: step 5/5.</text>
</comment>
<comment type="subunit">
    <text evidence="1">Tetramer of two alpha and two beta chains.</text>
</comment>
<comment type="similarity">
    <text evidence="1">Belongs to the TrpA family.</text>
</comment>
<organism>
    <name type="scientific">Acidithiobacillus ferrooxidans (strain ATCC 23270 / DSM 14882 / CIP 104768 / NCIMB 8455)</name>
    <name type="common">Ferrobacillus ferrooxidans (strain ATCC 23270)</name>
    <dbReference type="NCBI Taxonomy" id="243159"/>
    <lineage>
        <taxon>Bacteria</taxon>
        <taxon>Pseudomonadati</taxon>
        <taxon>Pseudomonadota</taxon>
        <taxon>Acidithiobacillia</taxon>
        <taxon>Acidithiobacillales</taxon>
        <taxon>Acidithiobacillaceae</taxon>
        <taxon>Acidithiobacillus</taxon>
    </lineage>
</organism>
<evidence type="ECO:0000255" key="1">
    <source>
        <dbReference type="HAMAP-Rule" id="MF_00131"/>
    </source>
</evidence>